<name>KN14E_ORYSJ</name>
<protein>
    <recommendedName>
        <fullName evidence="5">Kinesin-like protein KIN-14E</fullName>
    </recommendedName>
</protein>
<keyword id="KW-0025">Alternative splicing</keyword>
<keyword id="KW-0067">ATP-binding</keyword>
<keyword id="KW-0175">Coiled coil</keyword>
<keyword id="KW-0493">Microtubule</keyword>
<keyword id="KW-0505">Motor protein</keyword>
<keyword id="KW-0547">Nucleotide-binding</keyword>
<keyword id="KW-1185">Reference proteome</keyword>
<feature type="chain" id="PRO_0000438631" description="Kinesin-like protein KIN-14E">
    <location>
        <begin position="1"/>
        <end position="1080"/>
    </location>
</feature>
<feature type="domain" description="Kinesin motor" evidence="2">
    <location>
        <begin position="407"/>
        <end position="729"/>
    </location>
</feature>
<feature type="region of interest" description="Disordered" evidence="3">
    <location>
        <begin position="1"/>
        <end position="35"/>
    </location>
</feature>
<feature type="region of interest" description="Disordered" evidence="3">
    <location>
        <begin position="960"/>
        <end position="1080"/>
    </location>
</feature>
<feature type="coiled-coil region" evidence="1">
    <location>
        <begin position="247"/>
        <end position="355"/>
    </location>
</feature>
<feature type="coiled-coil region" evidence="1">
    <location>
        <begin position="736"/>
        <end position="893"/>
    </location>
</feature>
<feature type="compositionally biased region" description="Basic and acidic residues" evidence="3">
    <location>
        <begin position="960"/>
        <end position="970"/>
    </location>
</feature>
<feature type="compositionally biased region" description="Polar residues" evidence="3">
    <location>
        <begin position="971"/>
        <end position="985"/>
    </location>
</feature>
<feature type="compositionally biased region" description="Low complexity" evidence="3">
    <location>
        <begin position="1047"/>
        <end position="1059"/>
    </location>
</feature>
<feature type="binding site" evidence="2">
    <location>
        <begin position="490"/>
        <end position="497"/>
    </location>
    <ligand>
        <name>ATP</name>
        <dbReference type="ChEBI" id="CHEBI:30616"/>
    </ligand>
</feature>
<feature type="splice variant" id="VSP_058690" description="In isoform 2.">
    <location>
        <begin position="852"/>
        <end position="872"/>
    </location>
</feature>
<gene>
    <name evidence="5" type="primary">KIN14E</name>
    <name evidence="9" type="ordered locus">Os03g0114000</name>
    <name evidence="7 8" type="ordered locus">LOC_Os03g02290</name>
    <name evidence="10" type="ORF">OsJ_09155</name>
    <name evidence="6" type="ORF">OSJNBa0090O10.9</name>
</gene>
<proteinExistence type="evidence at transcript level"/>
<sequence length="1080" mass="120332">MDFSWTTGWEKAAADDDEAESAPAPAPPAPSPQEAAESMILVPGPRVVLSGLMRGDCRADDSVLFINAGGSATEGCEPSSKLSEDSFFEGGDAIETSEDIVEGGDYPSLYHSARYGNFSYKIDGLAPGDYFLDLHFAEIVNTYGPKGIRAFDVLVQEEKANTLTHILSELDVYAVVGGNRPLQVRDIRVTVESDSAIVINFKGVRGSPMVCGICIRKRVAMAVTDMVTEGNVLCKRCSAHTGNSPLQTRTSKLISKYEKQIEELTNQCNMKSDECYMAWSSVESTNQELERLKIELHQKVMQSDNIEQVVDRQADQLRSVSQKYENAKKLWAAAISNLENKIKAMKQEQTLLSLEAHDCANAVPDLSKMIGAVQTLVAQCEDLKLKYYEEMAKRKKLHNIVEETKGNIRVFCRCRPLSKDETSSGYKCAVDFDGAKDGDIAIVNGGAAKKTFKFDRVYMPTDNQADVYADASPLVTSVLDGYNVCIFAYGQTGTGKTFTMEGTERNRGVNYRTLEELFKIAEERKETVTYSISVSVLEVYNEQIRDLLASSPSSKKLEIKQASEGSHHVPGIVEAKVENIKEVWDVLQAGSNARAVGSNNVNEHSSRSHCMLCIMVRAENLMNGECTRSKLWLVDLAGSERLAKTDVQGERLKEAQNINRSLSALGDVISALATKNSHIPYRNSKLTHLLQDSLGGDSKALMFVQISPSNNDVSETLSSLNFASRVRRIELGPAKKQVDTAELQKVKQMLERAKQDIRLKDDSLRKLEDNCQNLENKAKGKEQFYKNLQEKVKELESQLDSKMHSQITSEKQQNELFGKLKEKEEMCTTLQQKIAEESEHKLRLQQQSESEIKELELKLKEQEHHRSVAESKIKELELKLKEQEHHRSVAESKAMEIGQELLETQRTEAMLQIKPRDLENNLQERTTLQDTNMILDSTNCMRVASTPGEAKAHLLTREEAMSEKEQHILRSSDSMNKKVTNNSSIVGAPEVVNEKKRKGDARNSSIGGELENQPVGSQNASRKRSLQGEPRLKRKSTEPLKNPGRVTATSKTAAATHKTGPVTRATRQQPAVNKTRGWVR</sequence>
<reference key="1">
    <citation type="journal article" date="2005" name="Genome Res.">
        <title>Sequence, annotation, and analysis of synteny between rice chromosome 3 and diverged grass species.</title>
        <authorList>
            <consortium name="The rice chromosome 3 sequencing consortium"/>
            <person name="Buell C.R."/>
            <person name="Yuan Q."/>
            <person name="Ouyang S."/>
            <person name="Liu J."/>
            <person name="Zhu W."/>
            <person name="Wang A."/>
            <person name="Maiti R."/>
            <person name="Haas B."/>
            <person name="Wortman J."/>
            <person name="Pertea M."/>
            <person name="Jones K.M."/>
            <person name="Kim M."/>
            <person name="Overton L."/>
            <person name="Tsitrin T."/>
            <person name="Fadrosh D."/>
            <person name="Bera J."/>
            <person name="Weaver B."/>
            <person name="Jin S."/>
            <person name="Johri S."/>
            <person name="Reardon M."/>
            <person name="Webb K."/>
            <person name="Hill J."/>
            <person name="Moffat K."/>
            <person name="Tallon L."/>
            <person name="Van Aken S."/>
            <person name="Lewis M."/>
            <person name="Utterback T."/>
            <person name="Feldblyum T."/>
            <person name="Zismann V."/>
            <person name="Iobst S."/>
            <person name="Hsiao J."/>
            <person name="de Vazeille A.R."/>
            <person name="Salzberg S.L."/>
            <person name="White O."/>
            <person name="Fraser C.M."/>
            <person name="Yu Y."/>
            <person name="Kim H."/>
            <person name="Rambo T."/>
            <person name="Currie J."/>
            <person name="Collura K."/>
            <person name="Kernodle-Thompson S."/>
            <person name="Wei F."/>
            <person name="Kudrna K."/>
            <person name="Ammiraju J.S.S."/>
            <person name="Luo M."/>
            <person name="Goicoechea J.L."/>
            <person name="Wing R.A."/>
            <person name="Henry D."/>
            <person name="Oates R."/>
            <person name="Palmer M."/>
            <person name="Pries G."/>
            <person name="Saski C."/>
            <person name="Simmons J."/>
            <person name="Soderlund C."/>
            <person name="Nelson W."/>
            <person name="de la Bastide M."/>
            <person name="Spiegel L."/>
            <person name="Nascimento L."/>
            <person name="Huang E."/>
            <person name="Preston R."/>
            <person name="Zutavern T."/>
            <person name="Palmer L."/>
            <person name="O'Shaughnessy A."/>
            <person name="Dike S."/>
            <person name="McCombie W.R."/>
            <person name="Minx P."/>
            <person name="Cordum H."/>
            <person name="Wilson R."/>
            <person name="Jin W."/>
            <person name="Lee H.R."/>
            <person name="Jiang J."/>
            <person name="Jackson S."/>
        </authorList>
    </citation>
    <scope>NUCLEOTIDE SEQUENCE [LARGE SCALE GENOMIC DNA]</scope>
    <source>
        <strain>cv. Nipponbare</strain>
    </source>
</reference>
<reference key="2">
    <citation type="journal article" date="2005" name="Nature">
        <title>The map-based sequence of the rice genome.</title>
        <authorList>
            <consortium name="International rice genome sequencing project (IRGSP)"/>
        </authorList>
    </citation>
    <scope>NUCLEOTIDE SEQUENCE [LARGE SCALE GENOMIC DNA]</scope>
    <source>
        <strain>cv. Nipponbare</strain>
    </source>
</reference>
<reference key="3">
    <citation type="journal article" date="2008" name="Nucleic Acids Res.">
        <title>The rice annotation project database (RAP-DB): 2008 update.</title>
        <authorList>
            <consortium name="The rice annotation project (RAP)"/>
        </authorList>
    </citation>
    <scope>GENOME REANNOTATION</scope>
    <source>
        <strain>cv. Nipponbare</strain>
    </source>
</reference>
<reference key="4">
    <citation type="journal article" date="2013" name="Rice">
        <title>Improvement of the Oryza sativa Nipponbare reference genome using next generation sequence and optical map data.</title>
        <authorList>
            <person name="Kawahara Y."/>
            <person name="de la Bastide M."/>
            <person name="Hamilton J.P."/>
            <person name="Kanamori H."/>
            <person name="McCombie W.R."/>
            <person name="Ouyang S."/>
            <person name="Schwartz D.C."/>
            <person name="Tanaka T."/>
            <person name="Wu J."/>
            <person name="Zhou S."/>
            <person name="Childs K.L."/>
            <person name="Davidson R.M."/>
            <person name="Lin H."/>
            <person name="Quesada-Ocampo L."/>
            <person name="Vaillancourt B."/>
            <person name="Sakai H."/>
            <person name="Lee S.S."/>
            <person name="Kim J."/>
            <person name="Numa H."/>
            <person name="Itoh T."/>
            <person name="Buell C.R."/>
            <person name="Matsumoto T."/>
        </authorList>
    </citation>
    <scope>GENOME REANNOTATION</scope>
    <source>
        <strain>cv. Nipponbare</strain>
    </source>
</reference>
<reference key="5">
    <citation type="journal article" date="2005" name="PLoS Biol.">
        <title>The genomes of Oryza sativa: a history of duplications.</title>
        <authorList>
            <person name="Yu J."/>
            <person name="Wang J."/>
            <person name="Lin W."/>
            <person name="Li S."/>
            <person name="Li H."/>
            <person name="Zhou J."/>
            <person name="Ni P."/>
            <person name="Dong W."/>
            <person name="Hu S."/>
            <person name="Zeng C."/>
            <person name="Zhang J."/>
            <person name="Zhang Y."/>
            <person name="Li R."/>
            <person name="Xu Z."/>
            <person name="Li S."/>
            <person name="Li X."/>
            <person name="Zheng H."/>
            <person name="Cong L."/>
            <person name="Lin L."/>
            <person name="Yin J."/>
            <person name="Geng J."/>
            <person name="Li G."/>
            <person name="Shi J."/>
            <person name="Liu J."/>
            <person name="Lv H."/>
            <person name="Li J."/>
            <person name="Wang J."/>
            <person name="Deng Y."/>
            <person name="Ran L."/>
            <person name="Shi X."/>
            <person name="Wang X."/>
            <person name="Wu Q."/>
            <person name="Li C."/>
            <person name="Ren X."/>
            <person name="Wang J."/>
            <person name="Wang X."/>
            <person name="Li D."/>
            <person name="Liu D."/>
            <person name="Zhang X."/>
            <person name="Ji Z."/>
            <person name="Zhao W."/>
            <person name="Sun Y."/>
            <person name="Zhang Z."/>
            <person name="Bao J."/>
            <person name="Han Y."/>
            <person name="Dong L."/>
            <person name="Ji J."/>
            <person name="Chen P."/>
            <person name="Wu S."/>
            <person name="Liu J."/>
            <person name="Xiao Y."/>
            <person name="Bu D."/>
            <person name="Tan J."/>
            <person name="Yang L."/>
            <person name="Ye C."/>
            <person name="Zhang J."/>
            <person name="Xu J."/>
            <person name="Zhou Y."/>
            <person name="Yu Y."/>
            <person name="Zhang B."/>
            <person name="Zhuang S."/>
            <person name="Wei H."/>
            <person name="Liu B."/>
            <person name="Lei M."/>
            <person name="Yu H."/>
            <person name="Li Y."/>
            <person name="Xu H."/>
            <person name="Wei S."/>
            <person name="He X."/>
            <person name="Fang L."/>
            <person name="Zhang Z."/>
            <person name="Zhang Y."/>
            <person name="Huang X."/>
            <person name="Su Z."/>
            <person name="Tong W."/>
            <person name="Li J."/>
            <person name="Tong Z."/>
            <person name="Li S."/>
            <person name="Ye J."/>
            <person name="Wang L."/>
            <person name="Fang L."/>
            <person name="Lei T."/>
            <person name="Chen C.-S."/>
            <person name="Chen H.-C."/>
            <person name="Xu Z."/>
            <person name="Li H."/>
            <person name="Huang H."/>
            <person name="Zhang F."/>
            <person name="Xu H."/>
            <person name="Li N."/>
            <person name="Zhao C."/>
            <person name="Li S."/>
            <person name="Dong L."/>
            <person name="Huang Y."/>
            <person name="Li L."/>
            <person name="Xi Y."/>
            <person name="Qi Q."/>
            <person name="Li W."/>
            <person name="Zhang B."/>
            <person name="Hu W."/>
            <person name="Zhang Y."/>
            <person name="Tian X."/>
            <person name="Jiao Y."/>
            <person name="Liang X."/>
            <person name="Jin J."/>
            <person name="Gao L."/>
            <person name="Zheng W."/>
            <person name="Hao B."/>
            <person name="Liu S.-M."/>
            <person name="Wang W."/>
            <person name="Yuan L."/>
            <person name="Cao M."/>
            <person name="McDermott J."/>
            <person name="Samudrala R."/>
            <person name="Wang J."/>
            <person name="Wong G.K.-S."/>
            <person name="Yang H."/>
        </authorList>
    </citation>
    <scope>NUCLEOTIDE SEQUENCE [LARGE SCALE GENOMIC DNA]</scope>
    <source>
        <strain>cv. Nipponbare</strain>
    </source>
</reference>
<reference key="6">
    <citation type="journal article" date="2003" name="Science">
        <title>Collection, mapping, and annotation of over 28,000 cDNA clones from japonica rice.</title>
        <authorList>
            <consortium name="The rice full-length cDNA consortium"/>
        </authorList>
    </citation>
    <scope>NUCLEOTIDE SEQUENCE [LARGE SCALE MRNA] (ISOFORM 2)</scope>
    <source>
        <strain>cv. Nipponbare</strain>
    </source>
</reference>
<reference key="7">
    <citation type="journal article" date="2009" name="Ann. Bot.">
        <title>Evaluating the microtubule cytoskeleton and its interacting proteins in monocots by mining the rice genome.</title>
        <authorList>
            <person name="Guo L."/>
            <person name="Ho C.M."/>
            <person name="Kong Z."/>
            <person name="Lee Y.R."/>
            <person name="Qian Q."/>
            <person name="Liu B."/>
        </authorList>
    </citation>
    <scope>GENE FAMILY</scope>
    <scope>NOMENCLATURE</scope>
</reference>
<organism>
    <name type="scientific">Oryza sativa subsp. japonica</name>
    <name type="common">Rice</name>
    <dbReference type="NCBI Taxonomy" id="39947"/>
    <lineage>
        <taxon>Eukaryota</taxon>
        <taxon>Viridiplantae</taxon>
        <taxon>Streptophyta</taxon>
        <taxon>Embryophyta</taxon>
        <taxon>Tracheophyta</taxon>
        <taxon>Spermatophyta</taxon>
        <taxon>Magnoliopsida</taxon>
        <taxon>Liliopsida</taxon>
        <taxon>Poales</taxon>
        <taxon>Poaceae</taxon>
        <taxon>BOP clade</taxon>
        <taxon>Oryzoideae</taxon>
        <taxon>Oryzeae</taxon>
        <taxon>Oryzinae</taxon>
        <taxon>Oryza</taxon>
        <taxon>Oryza sativa</taxon>
    </lineage>
</organism>
<dbReference type="EMBL" id="AC134237">
    <property type="protein sequence ID" value="AAO17019.1"/>
    <property type="status" value="ALT_SEQ"/>
    <property type="molecule type" value="Genomic_DNA"/>
</dbReference>
<dbReference type="EMBL" id="DP000009">
    <property type="protein sequence ID" value="ABF93626.1"/>
    <property type="status" value="ALT_SEQ"/>
    <property type="molecule type" value="Genomic_DNA"/>
</dbReference>
<dbReference type="EMBL" id="DP000009">
    <property type="protein sequence ID" value="ABF93627.1"/>
    <property type="status" value="ALT_SEQ"/>
    <property type="molecule type" value="Genomic_DNA"/>
</dbReference>
<dbReference type="EMBL" id="AP008209">
    <property type="protein sequence ID" value="BAF10654.1"/>
    <property type="status" value="ALT_SEQ"/>
    <property type="molecule type" value="Genomic_DNA"/>
</dbReference>
<dbReference type="EMBL" id="AP014959">
    <property type="protein sequence ID" value="BAS81953.1"/>
    <property type="status" value="ALT_SEQ"/>
    <property type="molecule type" value="Genomic_DNA"/>
</dbReference>
<dbReference type="EMBL" id="CM000140">
    <property type="protein sequence ID" value="EEE58202.1"/>
    <property type="molecule type" value="Genomic_DNA"/>
</dbReference>
<dbReference type="EMBL" id="AK063381">
    <property type="protein sequence ID" value="BAG88675.1"/>
    <property type="status" value="ALT_INIT"/>
    <property type="molecule type" value="mRNA"/>
</dbReference>
<dbReference type="SMR" id="B9FAF3"/>
<dbReference type="FunCoup" id="B9FAF3">
    <property type="interactions" value="26"/>
</dbReference>
<dbReference type="STRING" id="39947.B9FAF3"/>
<dbReference type="PaxDb" id="39947-B9FAF3"/>
<dbReference type="KEGG" id="dosa:Os03g0114000"/>
<dbReference type="eggNOG" id="KOG0239">
    <property type="taxonomic scope" value="Eukaryota"/>
</dbReference>
<dbReference type="InParanoid" id="B9FAF3"/>
<dbReference type="Proteomes" id="UP000000763">
    <property type="component" value="Chromosome 3"/>
</dbReference>
<dbReference type="Proteomes" id="UP000007752">
    <property type="component" value="Chromosome 3"/>
</dbReference>
<dbReference type="Proteomes" id="UP000059680">
    <property type="component" value="Chromosome 3"/>
</dbReference>
<dbReference type="GO" id="GO:0005874">
    <property type="term" value="C:microtubule"/>
    <property type="evidence" value="ECO:0007669"/>
    <property type="project" value="UniProtKB-KW"/>
</dbReference>
<dbReference type="GO" id="GO:0015630">
    <property type="term" value="C:microtubule cytoskeleton"/>
    <property type="evidence" value="ECO:0000318"/>
    <property type="project" value="GO_Central"/>
</dbReference>
<dbReference type="GO" id="GO:0005524">
    <property type="term" value="F:ATP binding"/>
    <property type="evidence" value="ECO:0007669"/>
    <property type="project" value="UniProtKB-KW"/>
</dbReference>
<dbReference type="GO" id="GO:0008017">
    <property type="term" value="F:microtubule binding"/>
    <property type="evidence" value="ECO:0000318"/>
    <property type="project" value="GO_Central"/>
</dbReference>
<dbReference type="GO" id="GO:0003777">
    <property type="term" value="F:microtubule motor activity"/>
    <property type="evidence" value="ECO:0007669"/>
    <property type="project" value="InterPro"/>
</dbReference>
<dbReference type="GO" id="GO:0007018">
    <property type="term" value="P:microtubule-based movement"/>
    <property type="evidence" value="ECO:0007669"/>
    <property type="project" value="InterPro"/>
</dbReference>
<dbReference type="GO" id="GO:0007017">
    <property type="term" value="P:microtubule-based process"/>
    <property type="evidence" value="ECO:0000318"/>
    <property type="project" value="GO_Central"/>
</dbReference>
<dbReference type="CDD" id="cd01366">
    <property type="entry name" value="KISc_C_terminal"/>
    <property type="match status" value="1"/>
</dbReference>
<dbReference type="FunFam" id="2.60.120.430:FF:000016">
    <property type="entry name" value="Kinesin-like protein KIN-14R"/>
    <property type="match status" value="1"/>
</dbReference>
<dbReference type="FunFam" id="3.40.850.10:FF:000057">
    <property type="entry name" value="kinesin-like protein KIN-14R"/>
    <property type="match status" value="1"/>
</dbReference>
<dbReference type="Gene3D" id="2.60.120.430">
    <property type="entry name" value="Galactose-binding lectin"/>
    <property type="match status" value="1"/>
</dbReference>
<dbReference type="Gene3D" id="3.40.850.10">
    <property type="entry name" value="Kinesin motor domain"/>
    <property type="match status" value="1"/>
</dbReference>
<dbReference type="InterPro" id="IPR027640">
    <property type="entry name" value="Kinesin-like_fam"/>
</dbReference>
<dbReference type="InterPro" id="IPR019821">
    <property type="entry name" value="Kinesin_motor_CS"/>
</dbReference>
<dbReference type="InterPro" id="IPR001752">
    <property type="entry name" value="Kinesin_motor_dom"/>
</dbReference>
<dbReference type="InterPro" id="IPR036961">
    <property type="entry name" value="Kinesin_motor_dom_sf"/>
</dbReference>
<dbReference type="InterPro" id="IPR021720">
    <property type="entry name" value="Malectin_dom"/>
</dbReference>
<dbReference type="InterPro" id="IPR027417">
    <property type="entry name" value="P-loop_NTPase"/>
</dbReference>
<dbReference type="PANTHER" id="PTHR47972:SF18">
    <property type="entry name" value="KINESIN-LIKE PROTEIN KIN-14R"/>
    <property type="match status" value="1"/>
</dbReference>
<dbReference type="PANTHER" id="PTHR47972">
    <property type="entry name" value="KINESIN-LIKE PROTEIN KLP-3"/>
    <property type="match status" value="1"/>
</dbReference>
<dbReference type="Pfam" id="PF00225">
    <property type="entry name" value="Kinesin"/>
    <property type="match status" value="1"/>
</dbReference>
<dbReference type="Pfam" id="PF11721">
    <property type="entry name" value="Malectin"/>
    <property type="match status" value="1"/>
</dbReference>
<dbReference type="PRINTS" id="PR00380">
    <property type="entry name" value="KINESINHEAVY"/>
</dbReference>
<dbReference type="SMART" id="SM00129">
    <property type="entry name" value="KISc"/>
    <property type="match status" value="1"/>
</dbReference>
<dbReference type="SUPFAM" id="SSF52540">
    <property type="entry name" value="P-loop containing nucleoside triphosphate hydrolases"/>
    <property type="match status" value="1"/>
</dbReference>
<dbReference type="PROSITE" id="PS00411">
    <property type="entry name" value="KINESIN_MOTOR_1"/>
    <property type="match status" value="1"/>
</dbReference>
<dbReference type="PROSITE" id="PS50067">
    <property type="entry name" value="KINESIN_MOTOR_2"/>
    <property type="match status" value="1"/>
</dbReference>
<comment type="alternative products">
    <event type="alternative splicing"/>
    <isoform>
        <id>B9FAF3-1</id>
        <name>1</name>
        <sequence type="displayed"/>
    </isoform>
    <isoform>
        <id>B9FAF3-2</id>
        <name>2</name>
        <sequence type="described" ref="VSP_058690"/>
    </isoform>
</comment>
<comment type="miscellaneous">
    <molecule>Isoform 2</molecule>
    <text evidence="5">Incomplete sequence.</text>
</comment>
<comment type="similarity">
    <text evidence="4">Belongs to the TRAFAC class myosin-kinesin ATPase superfamily. Kinesin family. KIN-14 subfamily.</text>
</comment>
<comment type="sequence caution" evidence="5">
    <conflict type="erroneous gene model prediction">
        <sequence resource="EMBL-CDS" id="AAO17019"/>
    </conflict>
</comment>
<comment type="sequence caution" evidence="5">
    <conflict type="erroneous gene model prediction">
        <sequence resource="EMBL-CDS" id="ABF93626"/>
    </conflict>
</comment>
<comment type="sequence caution" evidence="5">
    <conflict type="erroneous gene model prediction">
        <sequence resource="EMBL-CDS" id="ABF93627"/>
    </conflict>
</comment>
<comment type="sequence caution" evidence="5">
    <conflict type="erroneous gene model prediction">
        <sequence resource="EMBL-CDS" id="BAF10654"/>
    </conflict>
</comment>
<comment type="sequence caution" evidence="5">
    <conflict type="erroneous initiation">
        <sequence resource="EMBL-CDS" id="BAG88675"/>
    </conflict>
    <text>Truncated N-terminus.</text>
</comment>
<comment type="sequence caution" evidence="5">
    <conflict type="erroneous gene model prediction">
        <sequence resource="EMBL-CDS" id="BAS81953"/>
    </conflict>
</comment>
<evidence type="ECO:0000255" key="1"/>
<evidence type="ECO:0000255" key="2">
    <source>
        <dbReference type="PROSITE-ProRule" id="PRU00283"/>
    </source>
</evidence>
<evidence type="ECO:0000256" key="3">
    <source>
        <dbReference type="SAM" id="MobiDB-lite"/>
    </source>
</evidence>
<evidence type="ECO:0000303" key="4">
    <source>
    </source>
</evidence>
<evidence type="ECO:0000305" key="5"/>
<evidence type="ECO:0000312" key="6">
    <source>
        <dbReference type="EMBL" id="AAO17019.1"/>
    </source>
</evidence>
<evidence type="ECO:0000312" key="7">
    <source>
        <dbReference type="EMBL" id="ABF93626.1"/>
    </source>
</evidence>
<evidence type="ECO:0000312" key="8">
    <source>
        <dbReference type="EMBL" id="ABF93627.1"/>
    </source>
</evidence>
<evidence type="ECO:0000312" key="9">
    <source>
        <dbReference type="EMBL" id="BAS81953.1"/>
    </source>
</evidence>
<evidence type="ECO:0000312" key="10">
    <source>
        <dbReference type="EMBL" id="EEE58202.1"/>
    </source>
</evidence>
<accession>B9FAF3</accession>
<accession>Q0DVT4</accession>
<accession>Q10SQ9</accession>
<accession>Q10SR0</accession>
<accession>Q8GZX4</accession>